<organism>
    <name type="scientific">Rattus norvegicus</name>
    <name type="common">Rat</name>
    <dbReference type="NCBI Taxonomy" id="10116"/>
    <lineage>
        <taxon>Eukaryota</taxon>
        <taxon>Metazoa</taxon>
        <taxon>Chordata</taxon>
        <taxon>Craniata</taxon>
        <taxon>Vertebrata</taxon>
        <taxon>Euteleostomi</taxon>
        <taxon>Mammalia</taxon>
        <taxon>Eutheria</taxon>
        <taxon>Euarchontoglires</taxon>
        <taxon>Glires</taxon>
        <taxon>Rodentia</taxon>
        <taxon>Myomorpha</taxon>
        <taxon>Muroidea</taxon>
        <taxon>Muridae</taxon>
        <taxon>Murinae</taxon>
        <taxon>Rattus</taxon>
    </lineage>
</organism>
<feature type="chain" id="PRO_0000049212" description="Homeobox protein OTX2">
    <location>
        <begin position="1" status="less than"/>
        <end position="70" status="greater than"/>
    </location>
</feature>
<feature type="region of interest" description="Disordered" evidence="2">
    <location>
        <begin position="34"/>
        <end position="70"/>
    </location>
</feature>
<feature type="compositionally biased region" description="Polar residues" evidence="2">
    <location>
        <begin position="45"/>
        <end position="70"/>
    </location>
</feature>
<feature type="non-terminal residue">
    <location>
        <position position="1"/>
    </location>
</feature>
<feature type="non-terminal residue">
    <location>
        <position position="70"/>
    </location>
</feature>
<gene>
    <name type="primary">Otx2</name>
</gene>
<proteinExistence type="evidence at transcript level"/>
<keyword id="KW-0217">Developmental protein</keyword>
<keyword id="KW-0238">DNA-binding</keyword>
<keyword id="KW-0371">Homeobox</keyword>
<keyword id="KW-0539">Nucleus</keyword>
<keyword id="KW-1185">Reference proteome</keyword>
<protein>
    <recommendedName>
        <fullName>Homeobox protein OTX2</fullName>
    </recommendedName>
    <alternativeName>
        <fullName>Orthodenticle homolog 2</fullName>
    </alternativeName>
</protein>
<reference key="1">
    <citation type="journal article" date="1995" name="J. Neurosci.">
        <title>Fibroblast growth factor 2 increases Otx2 expression in precursor cells from mammalian telencephalon.</title>
        <authorList>
            <person name="Robel L."/>
            <person name="Ding M."/>
            <person name="James A.J."/>
            <person name="Lin X."/>
            <person name="Simeone A."/>
            <person name="Leckman J.F."/>
            <person name="Vaccarino F.M."/>
        </authorList>
    </citation>
    <scope>NUCLEOTIDE SEQUENCE [MRNA]</scope>
    <scope>DEVELOPMENTAL STAGE</scope>
    <scope>INDUCTION BY FGF2</scope>
</reference>
<comment type="function">
    <text evidence="1">Transcription factor probably involved in the development of the brain and the sense organs. Can bind to the bicoid/BCD target sequence (BTS): 5'-TCTAATCCC-3'.</text>
</comment>
<comment type="subcellular location">
    <subcellularLocation>
        <location evidence="1">Nucleus</location>
    </subcellularLocation>
</comment>
<comment type="developmental stage">
    <text evidence="3">Expressed in the dorsal and basal telencephalon, in a subpopulation of proliferating neuroblasts, early in development (at least from 11.5 dpc).</text>
</comment>
<comment type="induction">
    <text evidence="3">Up-regulated by FGF2 treatment in embryonic telencephalon primary cultures.</text>
</comment>
<comment type="similarity">
    <text evidence="4">Belongs to the paired homeobox family. Bicoid subfamily.</text>
</comment>
<evidence type="ECO:0000250" key="1">
    <source>
        <dbReference type="UniProtKB" id="P32243"/>
    </source>
</evidence>
<evidence type="ECO:0000256" key="2">
    <source>
        <dbReference type="SAM" id="MobiDB-lite"/>
    </source>
</evidence>
<evidence type="ECO:0000269" key="3">
    <source>
    </source>
</evidence>
<evidence type="ECO:0000305" key="4"/>
<sequence>MTYTQASGYSQGYAGSTSYFGGMDCGSYLTPMHHQLPGPGATLSPMGTNAVTSHLNQSPASLSTQGYGAS</sequence>
<accession>Q64201</accession>
<dbReference type="EMBL" id="S81922">
    <property type="protein sequence ID" value="AAP32271.1"/>
    <property type="molecule type" value="mRNA"/>
</dbReference>
<dbReference type="STRING" id="10116.ENSRNOP00000064262"/>
<dbReference type="PaxDb" id="10116-ENSRNOP00000018109"/>
<dbReference type="UCSC" id="RGD:1305705">
    <property type="organism name" value="rat"/>
</dbReference>
<dbReference type="AGR" id="RGD:1305705"/>
<dbReference type="RGD" id="1305705">
    <property type="gene designation" value="Otx2"/>
</dbReference>
<dbReference type="eggNOG" id="KOG2251">
    <property type="taxonomic scope" value="Eukaryota"/>
</dbReference>
<dbReference type="InParanoid" id="Q64201"/>
<dbReference type="Proteomes" id="UP000002494">
    <property type="component" value="Unplaced"/>
</dbReference>
<dbReference type="GO" id="GO:0005737">
    <property type="term" value="C:cytoplasm"/>
    <property type="evidence" value="ECO:0000266"/>
    <property type="project" value="RGD"/>
</dbReference>
<dbReference type="GO" id="GO:0030426">
    <property type="term" value="C:growth cone"/>
    <property type="evidence" value="ECO:0000266"/>
    <property type="project" value="RGD"/>
</dbReference>
<dbReference type="GO" id="GO:0005634">
    <property type="term" value="C:nucleus"/>
    <property type="evidence" value="ECO:0000266"/>
    <property type="project" value="RGD"/>
</dbReference>
<dbReference type="GO" id="GO:0032991">
    <property type="term" value="C:protein-containing complex"/>
    <property type="evidence" value="ECO:0000266"/>
    <property type="project" value="RGD"/>
</dbReference>
<dbReference type="GO" id="GO:0005667">
    <property type="term" value="C:transcription regulator complex"/>
    <property type="evidence" value="ECO:0000266"/>
    <property type="project" value="RGD"/>
</dbReference>
<dbReference type="GO" id="GO:0001228">
    <property type="term" value="F:DNA-binding transcription activator activity, RNA polymerase II-specific"/>
    <property type="evidence" value="ECO:0000266"/>
    <property type="project" value="RGD"/>
</dbReference>
<dbReference type="GO" id="GO:0000978">
    <property type="term" value="F:RNA polymerase II cis-regulatory region sequence-specific DNA binding"/>
    <property type="evidence" value="ECO:0000266"/>
    <property type="project" value="RGD"/>
</dbReference>
<dbReference type="GO" id="GO:1990837">
    <property type="term" value="F:sequence-specific double-stranded DNA binding"/>
    <property type="evidence" value="ECO:0000266"/>
    <property type="project" value="RGD"/>
</dbReference>
<dbReference type="GO" id="GO:0009887">
    <property type="term" value="P:animal organ morphogenesis"/>
    <property type="evidence" value="ECO:0000266"/>
    <property type="project" value="RGD"/>
</dbReference>
<dbReference type="GO" id="GO:0009952">
    <property type="term" value="P:anterior/posterior pattern specification"/>
    <property type="evidence" value="ECO:0000266"/>
    <property type="project" value="RGD"/>
</dbReference>
<dbReference type="GO" id="GO:0007411">
    <property type="term" value="P:axon guidance"/>
    <property type="evidence" value="ECO:0000266"/>
    <property type="project" value="RGD"/>
</dbReference>
<dbReference type="GO" id="GO:0045165">
    <property type="term" value="P:cell fate commitment"/>
    <property type="evidence" value="ECO:0000266"/>
    <property type="project" value="RGD"/>
</dbReference>
<dbReference type="GO" id="GO:1990830">
    <property type="term" value="P:cellular response to leukemia inhibitory factor"/>
    <property type="evidence" value="ECO:0000266"/>
    <property type="project" value="RGD"/>
</dbReference>
<dbReference type="GO" id="GO:0007417">
    <property type="term" value="P:central nervous system development"/>
    <property type="evidence" value="ECO:0000266"/>
    <property type="project" value="RGD"/>
</dbReference>
<dbReference type="GO" id="GO:0048852">
    <property type="term" value="P:diencephalon morphogenesis"/>
    <property type="evidence" value="ECO:0000266"/>
    <property type="project" value="RGD"/>
</dbReference>
<dbReference type="GO" id="GO:0071542">
    <property type="term" value="P:dopaminergic neuron differentiation"/>
    <property type="evidence" value="ECO:0000266"/>
    <property type="project" value="RGD"/>
</dbReference>
<dbReference type="GO" id="GO:0009953">
    <property type="term" value="P:dorsal/ventral pattern formation"/>
    <property type="evidence" value="ECO:0000266"/>
    <property type="project" value="RGD"/>
</dbReference>
<dbReference type="GO" id="GO:0007492">
    <property type="term" value="P:endoderm development"/>
    <property type="evidence" value="ECO:0000266"/>
    <property type="project" value="RGD"/>
</dbReference>
<dbReference type="GO" id="GO:0042706">
    <property type="term" value="P:eye photoreceptor cell fate commitment"/>
    <property type="evidence" value="ECO:0000266"/>
    <property type="project" value="RGD"/>
</dbReference>
<dbReference type="GO" id="GO:0030900">
    <property type="term" value="P:forebrain development"/>
    <property type="evidence" value="ECO:0000266"/>
    <property type="project" value="RGD"/>
</dbReference>
<dbReference type="GO" id="GO:0042472">
    <property type="term" value="P:inner ear morphogenesis"/>
    <property type="evidence" value="ECO:0000266"/>
    <property type="project" value="RGD"/>
</dbReference>
<dbReference type="GO" id="GO:0048382">
    <property type="term" value="P:mesendoderm development"/>
    <property type="evidence" value="ECO:0000266"/>
    <property type="project" value="RGD"/>
</dbReference>
<dbReference type="GO" id="GO:0022037">
    <property type="term" value="P:metencephalon development"/>
    <property type="evidence" value="ECO:0000266"/>
    <property type="project" value="RGD"/>
</dbReference>
<dbReference type="GO" id="GO:0030901">
    <property type="term" value="P:midbrain development"/>
    <property type="evidence" value="ECO:0000266"/>
    <property type="project" value="RGD"/>
</dbReference>
<dbReference type="GO" id="GO:0060563">
    <property type="term" value="P:neuroepithelial cell differentiation"/>
    <property type="evidence" value="ECO:0000266"/>
    <property type="project" value="RGD"/>
</dbReference>
<dbReference type="GO" id="GO:0048663">
    <property type="term" value="P:neuron fate commitment"/>
    <property type="evidence" value="ECO:0000266"/>
    <property type="project" value="RGD"/>
</dbReference>
<dbReference type="GO" id="GO:0048664">
    <property type="term" value="P:neuron fate determination"/>
    <property type="evidence" value="ECO:0000266"/>
    <property type="project" value="RGD"/>
</dbReference>
<dbReference type="GO" id="GO:0048665">
    <property type="term" value="P:neuron fate specification"/>
    <property type="evidence" value="ECO:0000266"/>
    <property type="project" value="RGD"/>
</dbReference>
<dbReference type="GO" id="GO:0048709">
    <property type="term" value="P:oligodendrocyte differentiation"/>
    <property type="evidence" value="ECO:0000266"/>
    <property type="project" value="RGD"/>
</dbReference>
<dbReference type="GO" id="GO:0045893">
    <property type="term" value="P:positive regulation of DNA-templated transcription"/>
    <property type="evidence" value="ECO:0000266"/>
    <property type="project" value="RGD"/>
</dbReference>
<dbReference type="GO" id="GO:0040019">
    <property type="term" value="P:positive regulation of embryonic development"/>
    <property type="evidence" value="ECO:0000266"/>
    <property type="project" value="RGD"/>
</dbReference>
<dbReference type="GO" id="GO:2000543">
    <property type="term" value="P:positive regulation of gastrulation"/>
    <property type="evidence" value="ECO:0000266"/>
    <property type="project" value="RGD"/>
</dbReference>
<dbReference type="GO" id="GO:0045944">
    <property type="term" value="P:positive regulation of transcription by RNA polymerase II"/>
    <property type="evidence" value="ECO:0000266"/>
    <property type="project" value="RGD"/>
</dbReference>
<dbReference type="GO" id="GO:0090009">
    <property type="term" value="P:primitive streak formation"/>
    <property type="evidence" value="ECO:0000266"/>
    <property type="project" value="RGD"/>
</dbReference>
<dbReference type="GO" id="GO:0065003">
    <property type="term" value="P:protein-containing complex assembly"/>
    <property type="evidence" value="ECO:0000266"/>
    <property type="project" value="RGD"/>
</dbReference>
<dbReference type="GO" id="GO:0006357">
    <property type="term" value="P:regulation of transcription by RNA polymerase II"/>
    <property type="evidence" value="ECO:0000266"/>
    <property type="project" value="RGD"/>
</dbReference>
<dbReference type="GO" id="GO:0032525">
    <property type="term" value="P:somite rostral/caudal axis specification"/>
    <property type="evidence" value="ECO:0000266"/>
    <property type="project" value="RGD"/>
</dbReference>
<dbReference type="GO" id="GO:0021978">
    <property type="term" value="P:telencephalon regionalization"/>
    <property type="evidence" value="ECO:0000266"/>
    <property type="project" value="RGD"/>
</dbReference>
<dbReference type="InterPro" id="IPR013851">
    <property type="entry name" value="Otx_TF_C"/>
</dbReference>
<dbReference type="Pfam" id="PF03529">
    <property type="entry name" value="TF_Otx"/>
    <property type="match status" value="1"/>
</dbReference>
<name>OTX2_RAT</name>